<proteinExistence type="evidence at transcript level"/>
<name>GUN22_ORYSJ</name>
<organism>
    <name type="scientific">Oryza sativa subsp. japonica</name>
    <name type="common">Rice</name>
    <dbReference type="NCBI Taxonomy" id="39947"/>
    <lineage>
        <taxon>Eukaryota</taxon>
        <taxon>Viridiplantae</taxon>
        <taxon>Streptophyta</taxon>
        <taxon>Embryophyta</taxon>
        <taxon>Tracheophyta</taxon>
        <taxon>Spermatophyta</taxon>
        <taxon>Magnoliopsida</taxon>
        <taxon>Liliopsida</taxon>
        <taxon>Poales</taxon>
        <taxon>Poaceae</taxon>
        <taxon>BOP clade</taxon>
        <taxon>Oryzoideae</taxon>
        <taxon>Oryzeae</taxon>
        <taxon>Oryzinae</taxon>
        <taxon>Oryza</taxon>
        <taxon>Oryza sativa</taxon>
    </lineage>
</organism>
<evidence type="ECO:0000250" key="1"/>
<evidence type="ECO:0000255" key="2"/>
<evidence type="ECO:0000255" key="3">
    <source>
        <dbReference type="PROSITE-ProRule" id="PRU10059"/>
    </source>
</evidence>
<evidence type="ECO:0000255" key="4">
    <source>
        <dbReference type="PROSITE-ProRule" id="PRU10140"/>
    </source>
</evidence>
<evidence type="ECO:0000305" key="5"/>
<dbReference type="EC" id="3.2.1.4"/>
<dbReference type="EMBL" id="AP006453">
    <property type="protein sequence ID" value="BAD26493.1"/>
    <property type="status" value="ALT_SEQ"/>
    <property type="molecule type" value="Genomic_DNA"/>
</dbReference>
<dbReference type="EMBL" id="AP007149">
    <property type="protein sequence ID" value="BAD26550.1"/>
    <property type="status" value="ALT_SEQ"/>
    <property type="molecule type" value="Genomic_DNA"/>
</dbReference>
<dbReference type="EMBL" id="AP008215">
    <property type="protein sequence ID" value="BAF25006.1"/>
    <property type="status" value="ALT_SEQ"/>
    <property type="molecule type" value="Genomic_DNA"/>
</dbReference>
<dbReference type="EMBL" id="AP014965">
    <property type="status" value="NOT_ANNOTATED_CDS"/>
    <property type="molecule type" value="Genomic_DNA"/>
</dbReference>
<dbReference type="EMBL" id="AK105580">
    <property type="status" value="NOT_ANNOTATED_CDS"/>
    <property type="molecule type" value="mRNA"/>
</dbReference>
<dbReference type="RefSeq" id="XP_015612486.1">
    <property type="nucleotide sequence ID" value="XM_015757000.1"/>
</dbReference>
<dbReference type="SMR" id="Q6H3Z9"/>
<dbReference type="FunCoup" id="Q6H3Z9">
    <property type="interactions" value="20"/>
</dbReference>
<dbReference type="STRING" id="39947.Q6H3Z9"/>
<dbReference type="CAZy" id="GH9">
    <property type="family name" value="Glycoside Hydrolase Family 9"/>
</dbReference>
<dbReference type="PaxDb" id="39947-Q6H3Z9"/>
<dbReference type="KEGG" id="dosa:Os09g0394300"/>
<dbReference type="eggNOG" id="ENOG502QRF6">
    <property type="taxonomic scope" value="Eukaryota"/>
</dbReference>
<dbReference type="HOGENOM" id="CLU_008926_1_4_1"/>
<dbReference type="InParanoid" id="Q6H3Z9"/>
<dbReference type="OrthoDB" id="10257085at2759"/>
<dbReference type="Proteomes" id="UP000000763">
    <property type="component" value="Chromosome 9"/>
</dbReference>
<dbReference type="Proteomes" id="UP000059680">
    <property type="component" value="Chromosome 9"/>
</dbReference>
<dbReference type="GO" id="GO:0005576">
    <property type="term" value="C:extracellular region"/>
    <property type="evidence" value="ECO:0007669"/>
    <property type="project" value="UniProtKB-SubCell"/>
</dbReference>
<dbReference type="GO" id="GO:0008810">
    <property type="term" value="F:cellulase activity"/>
    <property type="evidence" value="ECO:0007669"/>
    <property type="project" value="UniProtKB-EC"/>
</dbReference>
<dbReference type="GO" id="GO:0071555">
    <property type="term" value="P:cell wall organization"/>
    <property type="evidence" value="ECO:0007669"/>
    <property type="project" value="UniProtKB-KW"/>
</dbReference>
<dbReference type="GO" id="GO:0030245">
    <property type="term" value="P:cellulose catabolic process"/>
    <property type="evidence" value="ECO:0007669"/>
    <property type="project" value="UniProtKB-KW"/>
</dbReference>
<dbReference type="FunFam" id="1.50.10.10:FF:000020">
    <property type="entry name" value="Endoglucanase"/>
    <property type="match status" value="1"/>
</dbReference>
<dbReference type="Gene3D" id="1.50.10.10">
    <property type="match status" value="1"/>
</dbReference>
<dbReference type="InterPro" id="IPR008928">
    <property type="entry name" value="6-hairpin_glycosidase_sf"/>
</dbReference>
<dbReference type="InterPro" id="IPR012341">
    <property type="entry name" value="6hp_glycosidase-like_sf"/>
</dbReference>
<dbReference type="InterPro" id="IPR001701">
    <property type="entry name" value="Glyco_hydro_9"/>
</dbReference>
<dbReference type="InterPro" id="IPR018221">
    <property type="entry name" value="Glyco_hydro_9_His_AS"/>
</dbReference>
<dbReference type="PANTHER" id="PTHR22298">
    <property type="entry name" value="ENDO-1,4-BETA-GLUCANASE"/>
    <property type="match status" value="1"/>
</dbReference>
<dbReference type="Pfam" id="PF00759">
    <property type="entry name" value="Glyco_hydro_9"/>
    <property type="match status" value="1"/>
</dbReference>
<dbReference type="SUPFAM" id="SSF48208">
    <property type="entry name" value="Six-hairpin glycosidases"/>
    <property type="match status" value="1"/>
</dbReference>
<dbReference type="PROSITE" id="PS60032">
    <property type="entry name" value="GH9_1"/>
    <property type="match status" value="1"/>
</dbReference>
<dbReference type="PROSITE" id="PS00592">
    <property type="entry name" value="GH9_2"/>
    <property type="match status" value="1"/>
</dbReference>
<comment type="catalytic activity">
    <reaction>
        <text>Endohydrolysis of (1-&gt;4)-beta-D-glucosidic linkages in cellulose, lichenin and cereal beta-D-glucans.</text>
        <dbReference type="EC" id="3.2.1.4"/>
    </reaction>
</comment>
<comment type="subcellular location">
    <subcellularLocation>
        <location evidence="1">Secreted</location>
    </subcellularLocation>
</comment>
<comment type="similarity">
    <text evidence="4 5">Belongs to the glycosyl hydrolase 9 (cellulase E) family.</text>
</comment>
<comment type="sequence caution" evidence="5">
    <conflict type="erroneous gene model prediction">
        <sequence resource="EMBL-CDS" id="BAD26493"/>
    </conflict>
</comment>
<comment type="sequence caution" evidence="5">
    <conflict type="erroneous gene model prediction">
        <sequence resource="EMBL-CDS" id="BAD26550"/>
    </conflict>
</comment>
<comment type="sequence caution" evidence="5">
    <conflict type="erroneous gene model prediction">
        <sequence resource="EMBL-CDS" id="BAF25006"/>
    </conflict>
</comment>
<reference key="1">
    <citation type="journal article" date="2005" name="Nature">
        <title>The map-based sequence of the rice genome.</title>
        <authorList>
            <consortium name="International rice genome sequencing project (IRGSP)"/>
        </authorList>
    </citation>
    <scope>NUCLEOTIDE SEQUENCE [LARGE SCALE GENOMIC DNA]</scope>
    <source>
        <strain>cv. Nipponbare</strain>
    </source>
</reference>
<reference key="2">
    <citation type="journal article" date="2008" name="Nucleic Acids Res.">
        <title>The rice annotation project database (RAP-DB): 2008 update.</title>
        <authorList>
            <consortium name="The rice annotation project (RAP)"/>
        </authorList>
    </citation>
    <scope>GENOME REANNOTATION</scope>
    <source>
        <strain>cv. Nipponbare</strain>
    </source>
</reference>
<reference key="3">
    <citation type="journal article" date="2013" name="Rice">
        <title>Improvement of the Oryza sativa Nipponbare reference genome using next generation sequence and optical map data.</title>
        <authorList>
            <person name="Kawahara Y."/>
            <person name="de la Bastide M."/>
            <person name="Hamilton J.P."/>
            <person name="Kanamori H."/>
            <person name="McCombie W.R."/>
            <person name="Ouyang S."/>
            <person name="Schwartz D.C."/>
            <person name="Tanaka T."/>
            <person name="Wu J."/>
            <person name="Zhou S."/>
            <person name="Childs K.L."/>
            <person name="Davidson R.M."/>
            <person name="Lin H."/>
            <person name="Quesada-Ocampo L."/>
            <person name="Vaillancourt B."/>
            <person name="Sakai H."/>
            <person name="Lee S.S."/>
            <person name="Kim J."/>
            <person name="Numa H."/>
            <person name="Itoh T."/>
            <person name="Buell C.R."/>
            <person name="Matsumoto T."/>
        </authorList>
    </citation>
    <scope>GENOME REANNOTATION</scope>
    <source>
        <strain>cv. Nipponbare</strain>
    </source>
</reference>
<reference key="4">
    <citation type="journal article" date="2003" name="Science">
        <title>Collection, mapping, and annotation of over 28,000 cDNA clones from japonica rice.</title>
        <authorList>
            <consortium name="The rice full-length cDNA consortium"/>
        </authorList>
    </citation>
    <scope>NUCLEOTIDE SEQUENCE [LARGE SCALE MRNA] OF 116-556</scope>
    <source>
        <strain>cv. Nipponbare</strain>
    </source>
</reference>
<keyword id="KW-0119">Carbohydrate metabolism</keyword>
<keyword id="KW-0961">Cell wall biogenesis/degradation</keyword>
<keyword id="KW-0136">Cellulose degradation</keyword>
<keyword id="KW-0326">Glycosidase</keyword>
<keyword id="KW-0378">Hydrolase</keyword>
<keyword id="KW-0624">Polysaccharide degradation</keyword>
<keyword id="KW-1185">Reference proteome</keyword>
<keyword id="KW-0964">Secreted</keyword>
<keyword id="KW-0732">Signal</keyword>
<sequence length="556" mass="61243">MSRGRARLQPPPPGTRTTTLAAVLVLVLLAVVALPLRCDAASAGGEEEEEQQPLDYREALEKSLLYFEAQRSGRLPYSQRVTWRGHSGLTDGLQQGVDLVGGYYDAGDHVKFGLPMAFTVTMLSWGAIDFAADIAAAGEWRHALEAIKWGTDYFVKAHTHPFVYWAEVGDGDTDHYCWQRPEDMTTSRQAYRVDRDNPGSDLAGETAAALAAASIVFRRSDPHYSHLLLHHAQQLFEFGDTYRGSYDSSIEEVRSYYASVSGYHDELLWAALWLHRATGKEEYLRYAVDNADSFGGVGWAITEFSWDVKYAGLQVLAAKLLLDGDPQAAAHRGVLEKYREKAEHYLCACLGRNINGADNVDRSPGGMLYVRQWNNLQYASSAAFLLTAYSHYLSSSSASASAALRCPGGAAAAAEMVSLARSQADYILGRNPLRLSYMVGYGRRYPARVHHRGASIVSHKEDGRFIGCVQGFDDWFGRGRANPNVLAGAIVGGPSRRDEFRDDRANYMQTEACTYNTAPMVAVFARLHRLTTAITTAAAAEDPDGGSPDRRSVDRR</sequence>
<accession>Q6H3Z9</accession>
<accession>Q0J1Y7</accession>
<feature type="signal peptide" evidence="2">
    <location>
        <begin position="1"/>
        <end position="33"/>
    </location>
</feature>
<feature type="chain" id="PRO_0000249299" description="Endoglucanase 22">
    <location>
        <begin position="34"/>
        <end position="556"/>
    </location>
</feature>
<feature type="active site" description="Nucleophile" evidence="4">
    <location>
        <position position="108"/>
    </location>
</feature>
<feature type="active site" evidence="3">
    <location>
        <position position="450"/>
    </location>
</feature>
<feature type="active site" evidence="3">
    <location>
        <position position="502"/>
    </location>
</feature>
<feature type="active site" evidence="3">
    <location>
        <position position="511"/>
    </location>
</feature>
<gene>
    <name type="primary">GLU11</name>
    <name type="ordered locus">Os09g0394300</name>
    <name type="ordered locus">LOC_Os09g23084</name>
    <name type="ORF">B1339H09.3</name>
    <name type="ORF">OSJNOa018M17.6</name>
</gene>
<protein>
    <recommendedName>
        <fullName>Endoglucanase 22</fullName>
        <ecNumber>3.2.1.4</ecNumber>
    </recommendedName>
    <alternativeName>
        <fullName>Endo-1,4-beta glucanase 22</fullName>
    </alternativeName>
    <alternativeName>
        <fullName>OsGLU11</fullName>
    </alternativeName>
</protein>